<comment type="function">
    <text evidence="1">Represses a number of genes involved in the response to DNA damage (SOS response), including recA and lexA. In the presence of single-stranded DNA, RecA interacts with LexA causing an autocatalytic cleavage which disrupts the DNA-binding part of LexA, leading to derepression of the SOS regulon and eventually DNA repair.</text>
</comment>
<comment type="catalytic activity">
    <reaction evidence="1">
        <text>Hydrolysis of Ala-|-Gly bond in repressor LexA.</text>
        <dbReference type="EC" id="3.4.21.88"/>
    </reaction>
</comment>
<comment type="subunit">
    <text evidence="1">Homodimer.</text>
</comment>
<comment type="similarity">
    <text evidence="1">Belongs to the peptidase S24 family.</text>
</comment>
<name>LEXA_DELAS</name>
<accession>A9BWH9</accession>
<proteinExistence type="inferred from homology"/>
<protein>
    <recommendedName>
        <fullName evidence="1">LexA repressor</fullName>
        <ecNumber evidence="1">3.4.21.88</ecNumber>
    </recommendedName>
</protein>
<feature type="chain" id="PRO_1000089560" description="LexA repressor">
    <location>
        <begin position="1"/>
        <end position="224"/>
    </location>
</feature>
<feature type="DNA-binding region" description="H-T-H motif" evidence="1">
    <location>
        <begin position="31"/>
        <end position="51"/>
    </location>
</feature>
<feature type="active site" description="For autocatalytic cleavage activity" evidence="1">
    <location>
        <position position="142"/>
    </location>
</feature>
<feature type="active site" description="For autocatalytic cleavage activity" evidence="1">
    <location>
        <position position="179"/>
    </location>
</feature>
<feature type="site" description="Cleavage; by autolysis" evidence="1">
    <location>
        <begin position="107"/>
        <end position="108"/>
    </location>
</feature>
<evidence type="ECO:0000255" key="1">
    <source>
        <dbReference type="HAMAP-Rule" id="MF_00015"/>
    </source>
</evidence>
<dbReference type="EC" id="3.4.21.88" evidence="1"/>
<dbReference type="EMBL" id="CP000884">
    <property type="protein sequence ID" value="ABX36199.1"/>
    <property type="molecule type" value="Genomic_DNA"/>
</dbReference>
<dbReference type="RefSeq" id="WP_012205399.1">
    <property type="nucleotide sequence ID" value="NC_010002.1"/>
</dbReference>
<dbReference type="SMR" id="A9BWH9"/>
<dbReference type="STRING" id="398578.Daci_3565"/>
<dbReference type="MEROPS" id="S24.001"/>
<dbReference type="GeneID" id="24116196"/>
<dbReference type="KEGG" id="dac:Daci_3565"/>
<dbReference type="eggNOG" id="COG1974">
    <property type="taxonomic scope" value="Bacteria"/>
</dbReference>
<dbReference type="HOGENOM" id="CLU_066192_45_3_4"/>
<dbReference type="Proteomes" id="UP000000784">
    <property type="component" value="Chromosome"/>
</dbReference>
<dbReference type="GO" id="GO:0003677">
    <property type="term" value="F:DNA binding"/>
    <property type="evidence" value="ECO:0007669"/>
    <property type="project" value="UniProtKB-UniRule"/>
</dbReference>
<dbReference type="GO" id="GO:0004252">
    <property type="term" value="F:serine-type endopeptidase activity"/>
    <property type="evidence" value="ECO:0007669"/>
    <property type="project" value="UniProtKB-UniRule"/>
</dbReference>
<dbReference type="GO" id="GO:0006281">
    <property type="term" value="P:DNA repair"/>
    <property type="evidence" value="ECO:0007669"/>
    <property type="project" value="UniProtKB-UniRule"/>
</dbReference>
<dbReference type="GO" id="GO:0006260">
    <property type="term" value="P:DNA replication"/>
    <property type="evidence" value="ECO:0007669"/>
    <property type="project" value="UniProtKB-UniRule"/>
</dbReference>
<dbReference type="GO" id="GO:0045892">
    <property type="term" value="P:negative regulation of DNA-templated transcription"/>
    <property type="evidence" value="ECO:0007669"/>
    <property type="project" value="UniProtKB-UniRule"/>
</dbReference>
<dbReference type="GO" id="GO:0006508">
    <property type="term" value="P:proteolysis"/>
    <property type="evidence" value="ECO:0007669"/>
    <property type="project" value="InterPro"/>
</dbReference>
<dbReference type="GO" id="GO:0009432">
    <property type="term" value="P:SOS response"/>
    <property type="evidence" value="ECO:0007669"/>
    <property type="project" value="UniProtKB-UniRule"/>
</dbReference>
<dbReference type="CDD" id="cd06529">
    <property type="entry name" value="S24_LexA-like"/>
    <property type="match status" value="1"/>
</dbReference>
<dbReference type="FunFam" id="1.10.10.10:FF:000009">
    <property type="entry name" value="LexA repressor"/>
    <property type="match status" value="1"/>
</dbReference>
<dbReference type="FunFam" id="2.10.109.10:FF:000001">
    <property type="entry name" value="LexA repressor"/>
    <property type="match status" value="1"/>
</dbReference>
<dbReference type="Gene3D" id="2.10.109.10">
    <property type="entry name" value="Umud Fragment, subunit A"/>
    <property type="match status" value="1"/>
</dbReference>
<dbReference type="Gene3D" id="1.10.10.10">
    <property type="entry name" value="Winged helix-like DNA-binding domain superfamily/Winged helix DNA-binding domain"/>
    <property type="match status" value="1"/>
</dbReference>
<dbReference type="HAMAP" id="MF_00015">
    <property type="entry name" value="LexA"/>
    <property type="match status" value="1"/>
</dbReference>
<dbReference type="InterPro" id="IPR006200">
    <property type="entry name" value="LexA"/>
</dbReference>
<dbReference type="InterPro" id="IPR039418">
    <property type="entry name" value="LexA-like"/>
</dbReference>
<dbReference type="InterPro" id="IPR036286">
    <property type="entry name" value="LexA/Signal_pep-like_sf"/>
</dbReference>
<dbReference type="InterPro" id="IPR006199">
    <property type="entry name" value="LexA_DNA-bd_dom"/>
</dbReference>
<dbReference type="InterPro" id="IPR050077">
    <property type="entry name" value="LexA_repressor"/>
</dbReference>
<dbReference type="InterPro" id="IPR006197">
    <property type="entry name" value="Peptidase_S24_LexA"/>
</dbReference>
<dbReference type="InterPro" id="IPR015927">
    <property type="entry name" value="Peptidase_S24_S26A/B/C"/>
</dbReference>
<dbReference type="InterPro" id="IPR036388">
    <property type="entry name" value="WH-like_DNA-bd_sf"/>
</dbReference>
<dbReference type="InterPro" id="IPR036390">
    <property type="entry name" value="WH_DNA-bd_sf"/>
</dbReference>
<dbReference type="NCBIfam" id="TIGR00498">
    <property type="entry name" value="lexA"/>
    <property type="match status" value="1"/>
</dbReference>
<dbReference type="PANTHER" id="PTHR33516">
    <property type="entry name" value="LEXA REPRESSOR"/>
    <property type="match status" value="1"/>
</dbReference>
<dbReference type="PANTHER" id="PTHR33516:SF2">
    <property type="entry name" value="LEXA REPRESSOR-RELATED"/>
    <property type="match status" value="1"/>
</dbReference>
<dbReference type="Pfam" id="PF01726">
    <property type="entry name" value="LexA_DNA_bind"/>
    <property type="match status" value="1"/>
</dbReference>
<dbReference type="Pfam" id="PF00717">
    <property type="entry name" value="Peptidase_S24"/>
    <property type="match status" value="1"/>
</dbReference>
<dbReference type="PRINTS" id="PR00726">
    <property type="entry name" value="LEXASERPTASE"/>
</dbReference>
<dbReference type="SUPFAM" id="SSF51306">
    <property type="entry name" value="LexA/Signal peptidase"/>
    <property type="match status" value="1"/>
</dbReference>
<dbReference type="SUPFAM" id="SSF46785">
    <property type="entry name" value="Winged helix' DNA-binding domain"/>
    <property type="match status" value="1"/>
</dbReference>
<organism>
    <name type="scientific">Delftia acidovorans (strain DSM 14801 / SPH-1)</name>
    <dbReference type="NCBI Taxonomy" id="398578"/>
    <lineage>
        <taxon>Bacteria</taxon>
        <taxon>Pseudomonadati</taxon>
        <taxon>Pseudomonadota</taxon>
        <taxon>Betaproteobacteria</taxon>
        <taxon>Burkholderiales</taxon>
        <taxon>Comamonadaceae</taxon>
        <taxon>Delftia</taxon>
    </lineage>
</organism>
<keyword id="KW-0068">Autocatalytic cleavage</keyword>
<keyword id="KW-0227">DNA damage</keyword>
<keyword id="KW-0234">DNA repair</keyword>
<keyword id="KW-0235">DNA replication</keyword>
<keyword id="KW-0238">DNA-binding</keyword>
<keyword id="KW-0378">Hydrolase</keyword>
<keyword id="KW-1185">Reference proteome</keyword>
<keyword id="KW-0678">Repressor</keyword>
<keyword id="KW-0742">SOS response</keyword>
<keyword id="KW-0804">Transcription</keyword>
<keyword id="KW-0805">Transcription regulation</keyword>
<gene>
    <name evidence="1" type="primary">lexA</name>
    <name type="ordered locus">Daci_3565</name>
</gene>
<reference key="1">
    <citation type="submission" date="2007-11" db="EMBL/GenBank/DDBJ databases">
        <title>Complete sequence of Delftia acidovorans DSM 14801 / SPH-1.</title>
        <authorList>
            <person name="Copeland A."/>
            <person name="Lucas S."/>
            <person name="Lapidus A."/>
            <person name="Barry K."/>
            <person name="Glavina del Rio T."/>
            <person name="Dalin E."/>
            <person name="Tice H."/>
            <person name="Pitluck S."/>
            <person name="Lowry S."/>
            <person name="Clum A."/>
            <person name="Schmutz J."/>
            <person name="Larimer F."/>
            <person name="Land M."/>
            <person name="Hauser L."/>
            <person name="Kyrpides N."/>
            <person name="Kim E."/>
            <person name="Schleheck D."/>
            <person name="Richardson P."/>
        </authorList>
    </citation>
    <scope>NUCLEOTIDE SEQUENCE [LARGE SCALE GENOMIC DNA]</scope>
    <source>
        <strain>DSM 14801 / SPH-1</strain>
    </source>
</reference>
<sequence length="224" mass="24217">MLDHPKLTARQQQILDLIQAAISRTGAPPTRAEIANTLGFKSANAAEEHLQALARKGVIELVSGTSRGIRLRTDTVRNINAARGTSFGLPLSALAPLMLPLVGRVAAGSPILAQEHIDQTYSVEPSLFQTRPDYLLRVRGMSMRDAGIMDGDLLAVQSAHEARNGQIVVARLGDEVTVKRLRRTTQGVELLPENPDYPVIRVAPEEAFAIEGLAVGLIRNSMSM</sequence>